<reference key="1">
    <citation type="journal article" date="2002" name="Nature">
        <title>The genome sequence of Schizosaccharomyces pombe.</title>
        <authorList>
            <person name="Wood V."/>
            <person name="Gwilliam R."/>
            <person name="Rajandream M.A."/>
            <person name="Lyne M.H."/>
            <person name="Lyne R."/>
            <person name="Stewart A."/>
            <person name="Sgouros J.G."/>
            <person name="Peat N."/>
            <person name="Hayles J."/>
            <person name="Baker S.G."/>
            <person name="Basham D."/>
            <person name="Bowman S."/>
            <person name="Brooks K."/>
            <person name="Brown D."/>
            <person name="Brown S."/>
            <person name="Chillingworth T."/>
            <person name="Churcher C.M."/>
            <person name="Collins M."/>
            <person name="Connor R."/>
            <person name="Cronin A."/>
            <person name="Davis P."/>
            <person name="Feltwell T."/>
            <person name="Fraser A."/>
            <person name="Gentles S."/>
            <person name="Goble A."/>
            <person name="Hamlin N."/>
            <person name="Harris D.E."/>
            <person name="Hidalgo J."/>
            <person name="Hodgson G."/>
            <person name="Holroyd S."/>
            <person name="Hornsby T."/>
            <person name="Howarth S."/>
            <person name="Huckle E.J."/>
            <person name="Hunt S."/>
            <person name="Jagels K."/>
            <person name="James K.D."/>
            <person name="Jones L."/>
            <person name="Jones M."/>
            <person name="Leather S."/>
            <person name="McDonald S."/>
            <person name="McLean J."/>
            <person name="Mooney P."/>
            <person name="Moule S."/>
            <person name="Mungall K.L."/>
            <person name="Murphy L.D."/>
            <person name="Niblett D."/>
            <person name="Odell C."/>
            <person name="Oliver K."/>
            <person name="O'Neil S."/>
            <person name="Pearson D."/>
            <person name="Quail M.A."/>
            <person name="Rabbinowitsch E."/>
            <person name="Rutherford K.M."/>
            <person name="Rutter S."/>
            <person name="Saunders D."/>
            <person name="Seeger K."/>
            <person name="Sharp S."/>
            <person name="Skelton J."/>
            <person name="Simmonds M.N."/>
            <person name="Squares R."/>
            <person name="Squares S."/>
            <person name="Stevens K."/>
            <person name="Taylor K."/>
            <person name="Taylor R.G."/>
            <person name="Tivey A."/>
            <person name="Walsh S.V."/>
            <person name="Warren T."/>
            <person name="Whitehead S."/>
            <person name="Woodward J.R."/>
            <person name="Volckaert G."/>
            <person name="Aert R."/>
            <person name="Robben J."/>
            <person name="Grymonprez B."/>
            <person name="Weltjens I."/>
            <person name="Vanstreels E."/>
            <person name="Rieger M."/>
            <person name="Schaefer M."/>
            <person name="Mueller-Auer S."/>
            <person name="Gabel C."/>
            <person name="Fuchs M."/>
            <person name="Duesterhoeft A."/>
            <person name="Fritzc C."/>
            <person name="Holzer E."/>
            <person name="Moestl D."/>
            <person name="Hilbert H."/>
            <person name="Borzym K."/>
            <person name="Langer I."/>
            <person name="Beck A."/>
            <person name="Lehrach H."/>
            <person name="Reinhardt R."/>
            <person name="Pohl T.M."/>
            <person name="Eger P."/>
            <person name="Zimmermann W."/>
            <person name="Wedler H."/>
            <person name="Wambutt R."/>
            <person name="Purnelle B."/>
            <person name="Goffeau A."/>
            <person name="Cadieu E."/>
            <person name="Dreano S."/>
            <person name="Gloux S."/>
            <person name="Lelaure V."/>
            <person name="Mottier S."/>
            <person name="Galibert F."/>
            <person name="Aves S.J."/>
            <person name="Xiang Z."/>
            <person name="Hunt C."/>
            <person name="Moore K."/>
            <person name="Hurst S.M."/>
            <person name="Lucas M."/>
            <person name="Rochet M."/>
            <person name="Gaillardin C."/>
            <person name="Tallada V.A."/>
            <person name="Garzon A."/>
            <person name="Thode G."/>
            <person name="Daga R.R."/>
            <person name="Cruzado L."/>
            <person name="Jimenez J."/>
            <person name="Sanchez M."/>
            <person name="del Rey F."/>
            <person name="Benito J."/>
            <person name="Dominguez A."/>
            <person name="Revuelta J.L."/>
            <person name="Moreno S."/>
            <person name="Armstrong J."/>
            <person name="Forsburg S.L."/>
            <person name="Cerutti L."/>
            <person name="Lowe T."/>
            <person name="McCombie W.R."/>
            <person name="Paulsen I."/>
            <person name="Potashkin J."/>
            <person name="Shpakovski G.V."/>
            <person name="Ussery D."/>
            <person name="Barrell B.G."/>
            <person name="Nurse P."/>
        </authorList>
    </citation>
    <scope>NUCLEOTIDE SEQUENCE [LARGE SCALE GENOMIC DNA]</scope>
    <source>
        <strain>972 / ATCC 24843</strain>
    </source>
</reference>
<reference key="2">
    <citation type="journal article" date="2006" name="Nat. Biotechnol.">
        <title>ORFeome cloning and global analysis of protein localization in the fission yeast Schizosaccharomyces pombe.</title>
        <authorList>
            <person name="Matsuyama A."/>
            <person name="Arai R."/>
            <person name="Yashiroda Y."/>
            <person name="Shirai A."/>
            <person name="Kamata A."/>
            <person name="Sekido S."/>
            <person name="Kobayashi Y."/>
            <person name="Hashimoto A."/>
            <person name="Hamamoto M."/>
            <person name="Hiraoka Y."/>
            <person name="Horinouchi S."/>
            <person name="Yoshida M."/>
        </authorList>
    </citation>
    <scope>SUBCELLULAR LOCATION [LARGE SCALE ANALYSIS]</scope>
</reference>
<keyword id="KW-0256">Endoplasmic reticulum</keyword>
<keyword id="KW-0472">Membrane</keyword>
<keyword id="KW-0675">Receptor</keyword>
<keyword id="KW-1185">Reference proteome</keyword>
<keyword id="KW-0732">Signal</keyword>
<keyword id="KW-0812">Transmembrane</keyword>
<keyword id="KW-1133">Transmembrane helix</keyword>
<name>YOD2_SCHPO</name>
<organism>
    <name type="scientific">Schizosaccharomyces pombe (strain 972 / ATCC 24843)</name>
    <name type="common">Fission yeast</name>
    <dbReference type="NCBI Taxonomy" id="284812"/>
    <lineage>
        <taxon>Eukaryota</taxon>
        <taxon>Fungi</taxon>
        <taxon>Dikarya</taxon>
        <taxon>Ascomycota</taxon>
        <taxon>Taphrinomycotina</taxon>
        <taxon>Schizosaccharomycetes</taxon>
        <taxon>Schizosaccharomycetales</taxon>
        <taxon>Schizosaccharomycetaceae</taxon>
        <taxon>Schizosaccharomyces</taxon>
    </lineage>
</organism>
<gene>
    <name type="ORF">SPBC18A7.02c</name>
</gene>
<proteinExistence type="inferred from homology"/>
<sequence>MKLLISLLWSIFFSIVYSEKTLLNFKHYELCNGIYSKSESGGSLNPAIYVNWTEPWGQEDEVEVLIFNWKEIRKLGAFRSDDQFTYICDYDAVYTDHLCEADQLGLYLWNSTSAKSIRSYIIPTNADPQNIIYEISQSGYYCIWSHSKKMLPYQALVNWQNAYGGLPASQFPRMPISGGITIAYSVILALWMFFRFQYKHSIVTVQKAIMFLLIFSCAQQAVTSIVLDTENLRNRGNFTWLGETLVSILFACQLVLDLALLLILSWGYTRYSTNMRDRLFTEAKIPLIICFFALFVVRFFAITIQSIHLGLWFCFFFLTACISALYILFGAFVALPSTLRALVEQRYYTLHSIYKIFRIMVLCGVVTIFSFSLVALIFCSNTNNNSTNKLWKIRWYFLDGWIDGVHLTYLITLSSLWRPSQENPDLDPTGLSYPVLDPRLEEELDLLEEDIRADKSK</sequence>
<feature type="signal peptide" evidence="1">
    <location>
        <begin position="1"/>
        <end position="18"/>
    </location>
</feature>
<feature type="chain" id="PRO_0000339415" description="Uncharacterized membrane protein C18A7.02c">
    <location>
        <begin position="19"/>
        <end position="457"/>
    </location>
</feature>
<feature type="topological domain" description="Lumenal" evidence="1">
    <location>
        <begin position="19"/>
        <end position="173"/>
    </location>
</feature>
<feature type="transmembrane region" description="Helical" evidence="1">
    <location>
        <begin position="174"/>
        <end position="194"/>
    </location>
</feature>
<feature type="topological domain" description="Cytoplasmic" evidence="1">
    <location>
        <begin position="195"/>
        <end position="207"/>
    </location>
</feature>
<feature type="transmembrane region" description="Helical" evidence="1">
    <location>
        <begin position="208"/>
        <end position="228"/>
    </location>
</feature>
<feature type="topological domain" description="Lumenal" evidence="1">
    <location>
        <begin position="229"/>
        <end position="243"/>
    </location>
</feature>
<feature type="transmembrane region" description="Helical" evidence="1">
    <location>
        <begin position="244"/>
        <end position="264"/>
    </location>
</feature>
<feature type="topological domain" description="Cytoplasmic" evidence="1">
    <location>
        <begin position="265"/>
        <end position="284"/>
    </location>
</feature>
<feature type="transmembrane region" description="Helical" evidence="1">
    <location>
        <begin position="285"/>
        <end position="305"/>
    </location>
</feature>
<feature type="topological domain" description="Lumenal" evidence="1">
    <location>
        <begin position="306"/>
        <end position="314"/>
    </location>
</feature>
<feature type="transmembrane region" description="Helical" evidence="1">
    <location>
        <begin position="315"/>
        <end position="335"/>
    </location>
</feature>
<feature type="topological domain" description="Cytoplasmic" evidence="1">
    <location>
        <begin position="336"/>
        <end position="358"/>
    </location>
</feature>
<feature type="transmembrane region" description="Helical" evidence="1">
    <location>
        <begin position="359"/>
        <end position="379"/>
    </location>
</feature>
<feature type="topological domain" description="Lumenal" evidence="1">
    <location>
        <begin position="380"/>
        <end position="457"/>
    </location>
</feature>
<evidence type="ECO:0000255" key="1"/>
<evidence type="ECO:0000269" key="2">
    <source>
    </source>
</evidence>
<evidence type="ECO:0000305" key="3"/>
<dbReference type="EMBL" id="CU329671">
    <property type="protein sequence ID" value="CAB45934.1"/>
    <property type="molecule type" value="Genomic_DNA"/>
</dbReference>
<dbReference type="PIR" id="T39751">
    <property type="entry name" value="T39751"/>
</dbReference>
<dbReference type="RefSeq" id="NP_596120.1">
    <property type="nucleotide sequence ID" value="NM_001022038.2"/>
</dbReference>
<dbReference type="BioGRID" id="277367">
    <property type="interactions" value="8"/>
</dbReference>
<dbReference type="FunCoup" id="Q9Y7Y9">
    <property type="interactions" value="15"/>
</dbReference>
<dbReference type="iPTMnet" id="Q9Y7Y9"/>
<dbReference type="PaxDb" id="4896-SPBC18A7.02c.1"/>
<dbReference type="EnsemblFungi" id="SPBC18A7.02c.1">
    <property type="protein sequence ID" value="SPBC18A7.02c.1:pep"/>
    <property type="gene ID" value="SPBC18A7.02c"/>
</dbReference>
<dbReference type="KEGG" id="spo:2540850"/>
<dbReference type="PomBase" id="SPBC18A7.02c"/>
<dbReference type="VEuPathDB" id="FungiDB:SPBC18A7.02c"/>
<dbReference type="eggNOG" id="KOG2568">
    <property type="taxonomic scope" value="Eukaryota"/>
</dbReference>
<dbReference type="HOGENOM" id="CLU_024065_1_0_1"/>
<dbReference type="InParanoid" id="Q9Y7Y9"/>
<dbReference type="OMA" id="VNWQNAY"/>
<dbReference type="PhylomeDB" id="Q9Y7Y9"/>
<dbReference type="PRO" id="PR:Q9Y7Y9"/>
<dbReference type="Proteomes" id="UP000002485">
    <property type="component" value="Chromosome II"/>
</dbReference>
<dbReference type="GO" id="GO:0005829">
    <property type="term" value="C:cytosol"/>
    <property type="evidence" value="ECO:0007669"/>
    <property type="project" value="GOC"/>
</dbReference>
<dbReference type="GO" id="GO:0005783">
    <property type="term" value="C:endoplasmic reticulum"/>
    <property type="evidence" value="ECO:0007005"/>
    <property type="project" value="PomBase"/>
</dbReference>
<dbReference type="GO" id="GO:0005789">
    <property type="term" value="C:endoplasmic reticulum membrane"/>
    <property type="evidence" value="ECO:0007669"/>
    <property type="project" value="UniProtKB-SubCell"/>
</dbReference>
<dbReference type="GO" id="GO:0005794">
    <property type="term" value="C:Golgi apparatus"/>
    <property type="evidence" value="ECO:0000318"/>
    <property type="project" value="GO_Central"/>
</dbReference>
<dbReference type="GO" id="GO:0016020">
    <property type="term" value="C:membrane"/>
    <property type="evidence" value="ECO:0000318"/>
    <property type="project" value="GO_Central"/>
</dbReference>
<dbReference type="GO" id="GO:0005886">
    <property type="term" value="C:plasma membrane"/>
    <property type="evidence" value="ECO:0000255"/>
    <property type="project" value="PomBase"/>
</dbReference>
<dbReference type="GO" id="GO:0038023">
    <property type="term" value="F:signaling receptor activity"/>
    <property type="evidence" value="ECO:0000255"/>
    <property type="project" value="PomBase"/>
</dbReference>
<dbReference type="GO" id="GO:0007166">
    <property type="term" value="P:cell surface receptor signaling pathway"/>
    <property type="evidence" value="ECO:0000255"/>
    <property type="project" value="PomBase"/>
</dbReference>
<dbReference type="GO" id="GO:0042147">
    <property type="term" value="P:retrograde transport, endosome to Golgi"/>
    <property type="evidence" value="ECO:0000318"/>
    <property type="project" value="GO_Central"/>
</dbReference>
<dbReference type="InterPro" id="IPR053937">
    <property type="entry name" value="GOST_TM"/>
</dbReference>
<dbReference type="InterPro" id="IPR009637">
    <property type="entry name" value="GPR107/GPR108-like"/>
</dbReference>
<dbReference type="InterPro" id="IPR053938">
    <property type="entry name" value="PTM1-like_N"/>
</dbReference>
<dbReference type="PANTHER" id="PTHR21229:SF1">
    <property type="entry name" value="GH17801P"/>
    <property type="match status" value="1"/>
</dbReference>
<dbReference type="PANTHER" id="PTHR21229">
    <property type="entry name" value="LUNG SEVEN TRANSMEMBRANE RECEPTOR"/>
    <property type="match status" value="1"/>
</dbReference>
<dbReference type="Pfam" id="PF06814">
    <property type="entry name" value="GOST_TM"/>
    <property type="match status" value="1"/>
</dbReference>
<dbReference type="Pfam" id="PF21902">
    <property type="entry name" value="PTM1-like_N"/>
    <property type="match status" value="1"/>
</dbReference>
<comment type="subcellular location">
    <subcellularLocation>
        <location evidence="2">Endoplasmic reticulum membrane</location>
        <topology evidence="2">Multi-pass membrane protein</topology>
    </subcellularLocation>
</comment>
<comment type="similarity">
    <text evidence="3">Belongs to the LU7TM family.</text>
</comment>
<accession>Q9Y7Y9</accession>
<protein>
    <recommendedName>
        <fullName>Uncharacterized membrane protein C18A7.02c</fullName>
    </recommendedName>
</protein>